<evidence type="ECO:0000255" key="1">
    <source>
        <dbReference type="HAMAP-Rule" id="MF_01454"/>
    </source>
</evidence>
<evidence type="ECO:0000255" key="2">
    <source>
        <dbReference type="PROSITE-ProRule" id="PRU01231"/>
    </source>
</evidence>
<evidence type="ECO:0000256" key="3">
    <source>
        <dbReference type="SAM" id="MobiDB-lite"/>
    </source>
</evidence>
<accession>B4S5P1</accession>
<comment type="function">
    <text evidence="1">An essential GTPase which binds GTP, GDP and possibly (p)ppGpp with moderate affinity, with high nucleotide exchange rates and a fairly low GTP hydrolysis rate. Plays a role in control of the cell cycle, stress response, ribosome biogenesis and in those bacteria that undergo differentiation, in morphogenesis control.</text>
</comment>
<comment type="cofactor">
    <cofactor evidence="1">
        <name>Mg(2+)</name>
        <dbReference type="ChEBI" id="CHEBI:18420"/>
    </cofactor>
</comment>
<comment type="subunit">
    <text evidence="1">Monomer.</text>
</comment>
<comment type="subcellular location">
    <subcellularLocation>
        <location evidence="1">Cytoplasm</location>
    </subcellularLocation>
</comment>
<comment type="similarity">
    <text evidence="1">Belongs to the TRAFAC class OBG-HflX-like GTPase superfamily. OBG GTPase family.</text>
</comment>
<organism>
    <name type="scientific">Prosthecochloris aestuarii (strain DSM 271 / SK 413)</name>
    <dbReference type="NCBI Taxonomy" id="290512"/>
    <lineage>
        <taxon>Bacteria</taxon>
        <taxon>Pseudomonadati</taxon>
        <taxon>Chlorobiota</taxon>
        <taxon>Chlorobiia</taxon>
        <taxon>Chlorobiales</taxon>
        <taxon>Chlorobiaceae</taxon>
        <taxon>Prosthecochloris</taxon>
    </lineage>
</organism>
<protein>
    <recommendedName>
        <fullName evidence="1">GTPase Obg</fullName>
        <ecNumber evidence="1">3.6.5.-</ecNumber>
    </recommendedName>
    <alternativeName>
        <fullName evidence="1">GTP-binding protein Obg</fullName>
    </alternativeName>
</protein>
<name>OBG_PROA2</name>
<proteinExistence type="inferred from homology"/>
<dbReference type="EC" id="3.6.5.-" evidence="1"/>
<dbReference type="EMBL" id="CP001108">
    <property type="protein sequence ID" value="ACF47088.1"/>
    <property type="molecule type" value="Genomic_DNA"/>
</dbReference>
<dbReference type="RefSeq" id="WP_012506620.1">
    <property type="nucleotide sequence ID" value="NC_011059.1"/>
</dbReference>
<dbReference type="SMR" id="B4S5P1"/>
<dbReference type="STRING" id="290512.Paes_2078"/>
<dbReference type="KEGG" id="paa:Paes_2078"/>
<dbReference type="eggNOG" id="COG0536">
    <property type="taxonomic scope" value="Bacteria"/>
</dbReference>
<dbReference type="HOGENOM" id="CLU_011747_2_3_10"/>
<dbReference type="Proteomes" id="UP000002725">
    <property type="component" value="Chromosome"/>
</dbReference>
<dbReference type="GO" id="GO:0005737">
    <property type="term" value="C:cytoplasm"/>
    <property type="evidence" value="ECO:0007669"/>
    <property type="project" value="UniProtKB-SubCell"/>
</dbReference>
<dbReference type="GO" id="GO:0005525">
    <property type="term" value="F:GTP binding"/>
    <property type="evidence" value="ECO:0007669"/>
    <property type="project" value="UniProtKB-UniRule"/>
</dbReference>
<dbReference type="GO" id="GO:0003924">
    <property type="term" value="F:GTPase activity"/>
    <property type="evidence" value="ECO:0007669"/>
    <property type="project" value="UniProtKB-UniRule"/>
</dbReference>
<dbReference type="GO" id="GO:0000287">
    <property type="term" value="F:magnesium ion binding"/>
    <property type="evidence" value="ECO:0007669"/>
    <property type="project" value="InterPro"/>
</dbReference>
<dbReference type="GO" id="GO:0042254">
    <property type="term" value="P:ribosome biogenesis"/>
    <property type="evidence" value="ECO:0007669"/>
    <property type="project" value="UniProtKB-UniRule"/>
</dbReference>
<dbReference type="CDD" id="cd01898">
    <property type="entry name" value="Obg"/>
    <property type="match status" value="1"/>
</dbReference>
<dbReference type="FunFam" id="2.70.210.12:FF:000001">
    <property type="entry name" value="GTPase Obg"/>
    <property type="match status" value="1"/>
</dbReference>
<dbReference type="Gene3D" id="2.70.210.12">
    <property type="entry name" value="GTP1/OBG domain"/>
    <property type="match status" value="1"/>
</dbReference>
<dbReference type="Gene3D" id="3.40.50.300">
    <property type="entry name" value="P-loop containing nucleotide triphosphate hydrolases"/>
    <property type="match status" value="1"/>
</dbReference>
<dbReference type="HAMAP" id="MF_01454">
    <property type="entry name" value="GTPase_Obg"/>
    <property type="match status" value="1"/>
</dbReference>
<dbReference type="InterPro" id="IPR031167">
    <property type="entry name" value="G_OBG"/>
</dbReference>
<dbReference type="InterPro" id="IPR006073">
    <property type="entry name" value="GTP-bd"/>
</dbReference>
<dbReference type="InterPro" id="IPR014100">
    <property type="entry name" value="GTP-bd_Obg/CgtA"/>
</dbReference>
<dbReference type="InterPro" id="IPR006074">
    <property type="entry name" value="GTP1-OBG_CS"/>
</dbReference>
<dbReference type="InterPro" id="IPR006169">
    <property type="entry name" value="GTP1_OBG_dom"/>
</dbReference>
<dbReference type="InterPro" id="IPR036726">
    <property type="entry name" value="GTP1_OBG_dom_sf"/>
</dbReference>
<dbReference type="InterPro" id="IPR045086">
    <property type="entry name" value="OBG_GTPase"/>
</dbReference>
<dbReference type="InterPro" id="IPR027417">
    <property type="entry name" value="P-loop_NTPase"/>
</dbReference>
<dbReference type="NCBIfam" id="TIGR02729">
    <property type="entry name" value="Obg_CgtA"/>
    <property type="match status" value="1"/>
</dbReference>
<dbReference type="NCBIfam" id="NF008954">
    <property type="entry name" value="PRK12296.1"/>
    <property type="match status" value="1"/>
</dbReference>
<dbReference type="NCBIfam" id="NF008955">
    <property type="entry name" value="PRK12297.1"/>
    <property type="match status" value="1"/>
</dbReference>
<dbReference type="NCBIfam" id="NF008956">
    <property type="entry name" value="PRK12299.1"/>
    <property type="match status" value="1"/>
</dbReference>
<dbReference type="PANTHER" id="PTHR11702">
    <property type="entry name" value="DEVELOPMENTALLY REGULATED GTP-BINDING PROTEIN-RELATED"/>
    <property type="match status" value="1"/>
</dbReference>
<dbReference type="PANTHER" id="PTHR11702:SF31">
    <property type="entry name" value="MITOCHONDRIAL RIBOSOME-ASSOCIATED GTPASE 2"/>
    <property type="match status" value="1"/>
</dbReference>
<dbReference type="Pfam" id="PF01018">
    <property type="entry name" value="GTP1_OBG"/>
    <property type="match status" value="1"/>
</dbReference>
<dbReference type="Pfam" id="PF01926">
    <property type="entry name" value="MMR_HSR1"/>
    <property type="match status" value="1"/>
</dbReference>
<dbReference type="PIRSF" id="PIRSF002401">
    <property type="entry name" value="GTP_bd_Obg/CgtA"/>
    <property type="match status" value="1"/>
</dbReference>
<dbReference type="PRINTS" id="PR00326">
    <property type="entry name" value="GTP1OBG"/>
</dbReference>
<dbReference type="SUPFAM" id="SSF82051">
    <property type="entry name" value="Obg GTP-binding protein N-terminal domain"/>
    <property type="match status" value="1"/>
</dbReference>
<dbReference type="SUPFAM" id="SSF52540">
    <property type="entry name" value="P-loop containing nucleoside triphosphate hydrolases"/>
    <property type="match status" value="1"/>
</dbReference>
<dbReference type="PROSITE" id="PS51710">
    <property type="entry name" value="G_OBG"/>
    <property type="match status" value="1"/>
</dbReference>
<dbReference type="PROSITE" id="PS00905">
    <property type="entry name" value="GTP1_OBG"/>
    <property type="match status" value="1"/>
</dbReference>
<dbReference type="PROSITE" id="PS51883">
    <property type="entry name" value="OBG"/>
    <property type="match status" value="1"/>
</dbReference>
<sequence length="327" mass="35111">MKFVDSARIVVKAGDGGNGCVSFRREKYVPKGGPDGGDGGRGGHVYLRANSQLATLLDFRYKKNYEALRGVHGQGSKKAGKTGKDIVINVPCGTLVKNSVSGEVICDLVEDGEEFLLARGGDGGRGNPHFTTSTRQAPRYAEPGGKGEELKVDLELKLMADVGLVGFPNAGKSTLISVLSAARPKIADYPFTTLVPNLGIVQYGEYKSFVMADIPGIIEGAAEGKGLGIQFLRHIERTKVLAVLVSGDGEDPVGEYRLLLGEMERFDPALLQKPRIIVVTKMDVVDEAFSLPDFEDDVPLIPVSSITRSGLEELRNALWNTINPSIP</sequence>
<gene>
    <name evidence="1" type="primary">obg</name>
    <name type="ordered locus">Paes_2078</name>
</gene>
<feature type="chain" id="PRO_0000386144" description="GTPase Obg">
    <location>
        <begin position="1"/>
        <end position="327"/>
    </location>
</feature>
<feature type="domain" description="Obg" evidence="2">
    <location>
        <begin position="1"/>
        <end position="159"/>
    </location>
</feature>
<feature type="domain" description="OBG-type G" evidence="1">
    <location>
        <begin position="160"/>
        <end position="323"/>
    </location>
</feature>
<feature type="region of interest" description="Disordered" evidence="3">
    <location>
        <begin position="120"/>
        <end position="145"/>
    </location>
</feature>
<feature type="binding site" evidence="1">
    <location>
        <begin position="166"/>
        <end position="173"/>
    </location>
    <ligand>
        <name>GTP</name>
        <dbReference type="ChEBI" id="CHEBI:37565"/>
    </ligand>
</feature>
<feature type="binding site" evidence="1">
    <location>
        <position position="173"/>
    </location>
    <ligand>
        <name>Mg(2+)</name>
        <dbReference type="ChEBI" id="CHEBI:18420"/>
    </ligand>
</feature>
<feature type="binding site" evidence="1">
    <location>
        <begin position="191"/>
        <end position="195"/>
    </location>
    <ligand>
        <name>GTP</name>
        <dbReference type="ChEBI" id="CHEBI:37565"/>
    </ligand>
</feature>
<feature type="binding site" evidence="1">
    <location>
        <position position="193"/>
    </location>
    <ligand>
        <name>Mg(2+)</name>
        <dbReference type="ChEBI" id="CHEBI:18420"/>
    </ligand>
</feature>
<feature type="binding site" evidence="1">
    <location>
        <begin position="213"/>
        <end position="216"/>
    </location>
    <ligand>
        <name>GTP</name>
        <dbReference type="ChEBI" id="CHEBI:37565"/>
    </ligand>
</feature>
<feature type="binding site" evidence="1">
    <location>
        <begin position="280"/>
        <end position="283"/>
    </location>
    <ligand>
        <name>GTP</name>
        <dbReference type="ChEBI" id="CHEBI:37565"/>
    </ligand>
</feature>
<feature type="binding site" evidence="1">
    <location>
        <begin position="304"/>
        <end position="306"/>
    </location>
    <ligand>
        <name>GTP</name>
        <dbReference type="ChEBI" id="CHEBI:37565"/>
    </ligand>
</feature>
<reference key="1">
    <citation type="submission" date="2008-06" db="EMBL/GenBank/DDBJ databases">
        <title>Complete sequence of chromosome of Prosthecochloris aestuarii DSM 271.</title>
        <authorList>
            <consortium name="US DOE Joint Genome Institute"/>
            <person name="Lucas S."/>
            <person name="Copeland A."/>
            <person name="Lapidus A."/>
            <person name="Glavina del Rio T."/>
            <person name="Dalin E."/>
            <person name="Tice H."/>
            <person name="Bruce D."/>
            <person name="Goodwin L."/>
            <person name="Pitluck S."/>
            <person name="Schmutz J."/>
            <person name="Larimer F."/>
            <person name="Land M."/>
            <person name="Hauser L."/>
            <person name="Kyrpides N."/>
            <person name="Anderson I."/>
            <person name="Liu Z."/>
            <person name="Li T."/>
            <person name="Zhao F."/>
            <person name="Overmann J."/>
            <person name="Bryant D.A."/>
            <person name="Richardson P."/>
        </authorList>
    </citation>
    <scope>NUCLEOTIDE SEQUENCE [LARGE SCALE GENOMIC DNA]</scope>
    <source>
        <strain>DSM 271 / SK 413</strain>
    </source>
</reference>
<keyword id="KW-0963">Cytoplasm</keyword>
<keyword id="KW-0342">GTP-binding</keyword>
<keyword id="KW-0378">Hydrolase</keyword>
<keyword id="KW-0460">Magnesium</keyword>
<keyword id="KW-0479">Metal-binding</keyword>
<keyword id="KW-0547">Nucleotide-binding</keyword>